<dbReference type="EMBL" id="BA000037">
    <property type="protein sequence ID" value="BAC96016.1"/>
    <property type="molecule type" value="Genomic_DNA"/>
</dbReference>
<dbReference type="RefSeq" id="WP_011079054.1">
    <property type="nucleotide sequence ID" value="NC_005139.1"/>
</dbReference>
<dbReference type="SMR" id="Q7MGH9"/>
<dbReference type="STRING" id="672.VV93_v1c29740"/>
<dbReference type="KEGG" id="vvy:VV3252"/>
<dbReference type="eggNOG" id="COG0224">
    <property type="taxonomic scope" value="Bacteria"/>
</dbReference>
<dbReference type="HOGENOM" id="CLU_050669_0_1_6"/>
<dbReference type="Proteomes" id="UP000002675">
    <property type="component" value="Chromosome I"/>
</dbReference>
<dbReference type="GO" id="GO:0005886">
    <property type="term" value="C:plasma membrane"/>
    <property type="evidence" value="ECO:0007669"/>
    <property type="project" value="UniProtKB-SubCell"/>
</dbReference>
<dbReference type="GO" id="GO:0045259">
    <property type="term" value="C:proton-transporting ATP synthase complex"/>
    <property type="evidence" value="ECO:0007669"/>
    <property type="project" value="UniProtKB-KW"/>
</dbReference>
<dbReference type="GO" id="GO:0005524">
    <property type="term" value="F:ATP binding"/>
    <property type="evidence" value="ECO:0007669"/>
    <property type="project" value="UniProtKB-UniRule"/>
</dbReference>
<dbReference type="GO" id="GO:0046933">
    <property type="term" value="F:proton-transporting ATP synthase activity, rotational mechanism"/>
    <property type="evidence" value="ECO:0007669"/>
    <property type="project" value="UniProtKB-UniRule"/>
</dbReference>
<dbReference type="GO" id="GO:0042777">
    <property type="term" value="P:proton motive force-driven plasma membrane ATP synthesis"/>
    <property type="evidence" value="ECO:0007669"/>
    <property type="project" value="UniProtKB-UniRule"/>
</dbReference>
<dbReference type="CDD" id="cd12151">
    <property type="entry name" value="F1-ATPase_gamma"/>
    <property type="match status" value="1"/>
</dbReference>
<dbReference type="FunFam" id="1.10.287.80:FF:000005">
    <property type="entry name" value="ATP synthase gamma chain"/>
    <property type="match status" value="2"/>
</dbReference>
<dbReference type="FunFam" id="3.40.1380.10:FF:000001">
    <property type="entry name" value="ATP synthase gamma chain"/>
    <property type="match status" value="1"/>
</dbReference>
<dbReference type="Gene3D" id="3.40.1380.10">
    <property type="match status" value="1"/>
</dbReference>
<dbReference type="Gene3D" id="1.10.287.80">
    <property type="entry name" value="ATP synthase, gamma subunit, helix hairpin domain"/>
    <property type="match status" value="1"/>
</dbReference>
<dbReference type="HAMAP" id="MF_00815">
    <property type="entry name" value="ATP_synth_gamma_bact"/>
    <property type="match status" value="1"/>
</dbReference>
<dbReference type="InterPro" id="IPR035968">
    <property type="entry name" value="ATP_synth_F1_ATPase_gsu"/>
</dbReference>
<dbReference type="InterPro" id="IPR000131">
    <property type="entry name" value="ATP_synth_F1_gsu"/>
</dbReference>
<dbReference type="InterPro" id="IPR023632">
    <property type="entry name" value="ATP_synth_F1_gsu_CS"/>
</dbReference>
<dbReference type="NCBIfam" id="TIGR01146">
    <property type="entry name" value="ATPsyn_F1gamma"/>
    <property type="match status" value="1"/>
</dbReference>
<dbReference type="NCBIfam" id="NF004144">
    <property type="entry name" value="PRK05621.1-1"/>
    <property type="match status" value="1"/>
</dbReference>
<dbReference type="PANTHER" id="PTHR11693">
    <property type="entry name" value="ATP SYNTHASE GAMMA CHAIN"/>
    <property type="match status" value="1"/>
</dbReference>
<dbReference type="PANTHER" id="PTHR11693:SF22">
    <property type="entry name" value="ATP SYNTHASE SUBUNIT GAMMA, MITOCHONDRIAL"/>
    <property type="match status" value="1"/>
</dbReference>
<dbReference type="Pfam" id="PF00231">
    <property type="entry name" value="ATP-synt"/>
    <property type="match status" value="1"/>
</dbReference>
<dbReference type="PRINTS" id="PR00126">
    <property type="entry name" value="ATPASEGAMMA"/>
</dbReference>
<dbReference type="SUPFAM" id="SSF52943">
    <property type="entry name" value="ATP synthase (F1-ATPase), gamma subunit"/>
    <property type="match status" value="1"/>
</dbReference>
<dbReference type="PROSITE" id="PS00153">
    <property type="entry name" value="ATPASE_GAMMA"/>
    <property type="match status" value="1"/>
</dbReference>
<accession>Q7MGH9</accession>
<reference key="1">
    <citation type="journal article" date="2003" name="Genome Res.">
        <title>Comparative genome analysis of Vibrio vulnificus, a marine pathogen.</title>
        <authorList>
            <person name="Chen C.-Y."/>
            <person name="Wu K.-M."/>
            <person name="Chang Y.-C."/>
            <person name="Chang C.-H."/>
            <person name="Tsai H.-C."/>
            <person name="Liao T.-L."/>
            <person name="Liu Y.-M."/>
            <person name="Chen H.-J."/>
            <person name="Shen A.B.-T."/>
            <person name="Li J.-C."/>
            <person name="Su T.-L."/>
            <person name="Shao C.-P."/>
            <person name="Lee C.-T."/>
            <person name="Hor L.-I."/>
            <person name="Tsai S.-F."/>
        </authorList>
    </citation>
    <scope>NUCLEOTIDE SEQUENCE [LARGE SCALE GENOMIC DNA]</scope>
    <source>
        <strain>YJ016</strain>
    </source>
</reference>
<name>ATPG_VIBVY</name>
<protein>
    <recommendedName>
        <fullName evidence="1">ATP synthase gamma chain</fullName>
    </recommendedName>
    <alternativeName>
        <fullName evidence="1">ATP synthase F1 sector gamma subunit</fullName>
    </alternativeName>
    <alternativeName>
        <fullName evidence="1">F-ATPase gamma subunit</fullName>
    </alternativeName>
</protein>
<evidence type="ECO:0000255" key="1">
    <source>
        <dbReference type="HAMAP-Rule" id="MF_00815"/>
    </source>
</evidence>
<keyword id="KW-0066">ATP synthesis</keyword>
<keyword id="KW-0997">Cell inner membrane</keyword>
<keyword id="KW-1003">Cell membrane</keyword>
<keyword id="KW-0139">CF(1)</keyword>
<keyword id="KW-0375">Hydrogen ion transport</keyword>
<keyword id="KW-0406">Ion transport</keyword>
<keyword id="KW-0472">Membrane</keyword>
<keyword id="KW-0813">Transport</keyword>
<organism>
    <name type="scientific">Vibrio vulnificus (strain YJ016)</name>
    <dbReference type="NCBI Taxonomy" id="196600"/>
    <lineage>
        <taxon>Bacteria</taxon>
        <taxon>Pseudomonadati</taxon>
        <taxon>Pseudomonadota</taxon>
        <taxon>Gammaproteobacteria</taxon>
        <taxon>Vibrionales</taxon>
        <taxon>Vibrionaceae</taxon>
        <taxon>Vibrio</taxon>
    </lineage>
</organism>
<feature type="chain" id="PRO_0000073415" description="ATP synthase gamma chain">
    <location>
        <begin position="1"/>
        <end position="288"/>
    </location>
</feature>
<gene>
    <name evidence="1" type="primary">atpG</name>
    <name type="ordered locus">VV3252</name>
</gene>
<comment type="function">
    <text evidence="1">Produces ATP from ADP in the presence of a proton gradient across the membrane. The gamma chain is believed to be important in regulating ATPase activity and the flow of protons through the CF(0) complex.</text>
</comment>
<comment type="subunit">
    <text evidence="1">F-type ATPases have 2 components, CF(1) - the catalytic core - and CF(0) - the membrane proton channel. CF(1) has five subunits: alpha(3), beta(3), gamma(1), delta(1), epsilon(1). CF(0) has three main subunits: a, b and c.</text>
</comment>
<comment type="subcellular location">
    <subcellularLocation>
        <location evidence="1">Cell inner membrane</location>
        <topology evidence="1">Peripheral membrane protein</topology>
    </subcellularLocation>
</comment>
<comment type="similarity">
    <text evidence="1">Belongs to the ATPase gamma chain family.</text>
</comment>
<sequence>MAGAKEIRSKIGSVKSTQKITKAMEMVAASKMRRSQDAMEASRPYAETMRKVIGHVANASLEYRHPYLDEREAKRVGYIIISTDRGLCGGLNINVFKKAVTDMQAWKEKGAEVELAVIGSKATAFFKHGGAKVAAQVSGLGDSPSLEDLIGSVSVMLEKYDEGELDRLYLVFNKFVNTMVQQPTIDQLLPLPKSDSKDMQREHSWDYIYEPEPQALLDALLVRYVESQVYQGVVENLACEQAARMVAMKAATDNATNLIDDLELVYNKARQAAITQELSEIVGGAAAV</sequence>
<proteinExistence type="inferred from homology"/>